<keyword id="KW-0028">Amino-acid biosynthesis</keyword>
<keyword id="KW-0368">Histidine biosynthesis</keyword>
<keyword id="KW-0378">Hydrolase</keyword>
<keyword id="KW-0486">Methionine biosynthesis</keyword>
<keyword id="KW-0511">Multifunctional enzyme</keyword>
<keyword id="KW-0521">NADP</keyword>
<keyword id="KW-0554">One-carbon metabolism</keyword>
<keyword id="KW-0560">Oxidoreductase</keyword>
<keyword id="KW-0658">Purine biosynthesis</keyword>
<keyword id="KW-1185">Reference proteome</keyword>
<sequence>MTAQIIDGKAIATTITERVAKGVKLRIANGLRAPGLAVILVGGDPASQIYVGSKRRTCEAVGIHSKAFDLPETTTQDELLALIDKLNDDPDIDGILVQFPLPDGFDQTSVIERIKPDKDVDGFHPYNVGRLAQRIPLLRSCTPRGIISMLEYIGTEFHGKHAVVVGASNIVGRPMTLELLLAGCTTTTCHRFTTDLAHYVKQADILVVARGKANFIPGEWIKKGATVLDVGINRLEDGSLAGDVDFAGAKERAAWISPVPGGVGPMTVATLIENTLFACNEFHSQ</sequence>
<reference key="1">
    <citation type="journal article" date="2008" name="BMC Genomics">
        <title>Genomics of an extreme psychrophile, Psychromonas ingrahamii.</title>
        <authorList>
            <person name="Riley M."/>
            <person name="Staley J.T."/>
            <person name="Danchin A."/>
            <person name="Wang T.Z."/>
            <person name="Brettin T.S."/>
            <person name="Hauser L.J."/>
            <person name="Land M.L."/>
            <person name="Thompson L.S."/>
        </authorList>
    </citation>
    <scope>NUCLEOTIDE SEQUENCE [LARGE SCALE GENOMIC DNA]</scope>
    <source>
        <strain>DSM 17664 / CCUG 51855 / 37</strain>
    </source>
</reference>
<dbReference type="EC" id="1.5.1.5" evidence="1"/>
<dbReference type="EC" id="3.5.4.9" evidence="1"/>
<dbReference type="EMBL" id="CP000510">
    <property type="protein sequence ID" value="ABM03290.1"/>
    <property type="molecule type" value="Genomic_DNA"/>
</dbReference>
<dbReference type="RefSeq" id="WP_011769850.1">
    <property type="nucleotide sequence ID" value="NC_008709.1"/>
</dbReference>
<dbReference type="SMR" id="A1SUX5"/>
<dbReference type="STRING" id="357804.Ping_1473"/>
<dbReference type="KEGG" id="pin:Ping_1473"/>
<dbReference type="eggNOG" id="COG0190">
    <property type="taxonomic scope" value="Bacteria"/>
</dbReference>
<dbReference type="HOGENOM" id="CLU_034045_2_1_6"/>
<dbReference type="OrthoDB" id="9803580at2"/>
<dbReference type="UniPathway" id="UPA00193"/>
<dbReference type="Proteomes" id="UP000000639">
    <property type="component" value="Chromosome"/>
</dbReference>
<dbReference type="GO" id="GO:0005829">
    <property type="term" value="C:cytosol"/>
    <property type="evidence" value="ECO:0007669"/>
    <property type="project" value="TreeGrafter"/>
</dbReference>
<dbReference type="GO" id="GO:0004477">
    <property type="term" value="F:methenyltetrahydrofolate cyclohydrolase activity"/>
    <property type="evidence" value="ECO:0007669"/>
    <property type="project" value="UniProtKB-UniRule"/>
</dbReference>
<dbReference type="GO" id="GO:0004488">
    <property type="term" value="F:methylenetetrahydrofolate dehydrogenase (NADP+) activity"/>
    <property type="evidence" value="ECO:0007669"/>
    <property type="project" value="UniProtKB-UniRule"/>
</dbReference>
<dbReference type="GO" id="GO:0000105">
    <property type="term" value="P:L-histidine biosynthetic process"/>
    <property type="evidence" value="ECO:0007669"/>
    <property type="project" value="UniProtKB-KW"/>
</dbReference>
<dbReference type="GO" id="GO:0009086">
    <property type="term" value="P:methionine biosynthetic process"/>
    <property type="evidence" value="ECO:0007669"/>
    <property type="project" value="UniProtKB-KW"/>
</dbReference>
<dbReference type="GO" id="GO:0006164">
    <property type="term" value="P:purine nucleotide biosynthetic process"/>
    <property type="evidence" value="ECO:0007669"/>
    <property type="project" value="UniProtKB-KW"/>
</dbReference>
<dbReference type="GO" id="GO:0035999">
    <property type="term" value="P:tetrahydrofolate interconversion"/>
    <property type="evidence" value="ECO:0007669"/>
    <property type="project" value="UniProtKB-UniRule"/>
</dbReference>
<dbReference type="CDD" id="cd01080">
    <property type="entry name" value="NAD_bind_m-THF_DH_Cyclohyd"/>
    <property type="match status" value="1"/>
</dbReference>
<dbReference type="FunFam" id="3.40.50.720:FF:000006">
    <property type="entry name" value="Bifunctional protein FolD"/>
    <property type="match status" value="1"/>
</dbReference>
<dbReference type="FunFam" id="3.40.50.10860:FF:000005">
    <property type="entry name" value="C-1-tetrahydrofolate synthase, cytoplasmic, putative"/>
    <property type="match status" value="1"/>
</dbReference>
<dbReference type="Gene3D" id="3.40.50.10860">
    <property type="entry name" value="Leucine Dehydrogenase, chain A, domain 1"/>
    <property type="match status" value="1"/>
</dbReference>
<dbReference type="Gene3D" id="3.40.50.720">
    <property type="entry name" value="NAD(P)-binding Rossmann-like Domain"/>
    <property type="match status" value="1"/>
</dbReference>
<dbReference type="HAMAP" id="MF_01576">
    <property type="entry name" value="THF_DHG_CYH"/>
    <property type="match status" value="1"/>
</dbReference>
<dbReference type="InterPro" id="IPR046346">
    <property type="entry name" value="Aminoacid_DH-like_N_sf"/>
</dbReference>
<dbReference type="InterPro" id="IPR036291">
    <property type="entry name" value="NAD(P)-bd_dom_sf"/>
</dbReference>
<dbReference type="InterPro" id="IPR000672">
    <property type="entry name" value="THF_DH/CycHdrlase"/>
</dbReference>
<dbReference type="InterPro" id="IPR020630">
    <property type="entry name" value="THF_DH/CycHdrlase_cat_dom"/>
</dbReference>
<dbReference type="InterPro" id="IPR020867">
    <property type="entry name" value="THF_DH/CycHdrlase_CS"/>
</dbReference>
<dbReference type="InterPro" id="IPR020631">
    <property type="entry name" value="THF_DH/CycHdrlase_NAD-bd_dom"/>
</dbReference>
<dbReference type="NCBIfam" id="NF008058">
    <property type="entry name" value="PRK10792.1"/>
    <property type="match status" value="1"/>
</dbReference>
<dbReference type="PANTHER" id="PTHR48099:SF5">
    <property type="entry name" value="C-1-TETRAHYDROFOLATE SYNTHASE, CYTOPLASMIC"/>
    <property type="match status" value="1"/>
</dbReference>
<dbReference type="PANTHER" id="PTHR48099">
    <property type="entry name" value="C-1-TETRAHYDROFOLATE SYNTHASE, CYTOPLASMIC-RELATED"/>
    <property type="match status" value="1"/>
</dbReference>
<dbReference type="Pfam" id="PF00763">
    <property type="entry name" value="THF_DHG_CYH"/>
    <property type="match status" value="1"/>
</dbReference>
<dbReference type="Pfam" id="PF02882">
    <property type="entry name" value="THF_DHG_CYH_C"/>
    <property type="match status" value="1"/>
</dbReference>
<dbReference type="PRINTS" id="PR00085">
    <property type="entry name" value="THFDHDRGNASE"/>
</dbReference>
<dbReference type="SUPFAM" id="SSF53223">
    <property type="entry name" value="Aminoacid dehydrogenase-like, N-terminal domain"/>
    <property type="match status" value="1"/>
</dbReference>
<dbReference type="SUPFAM" id="SSF51735">
    <property type="entry name" value="NAD(P)-binding Rossmann-fold domains"/>
    <property type="match status" value="1"/>
</dbReference>
<dbReference type="PROSITE" id="PS00767">
    <property type="entry name" value="THF_DHG_CYH_2"/>
    <property type="match status" value="1"/>
</dbReference>
<organism>
    <name type="scientific">Psychromonas ingrahamii (strain DSM 17664 / CCUG 51855 / 37)</name>
    <dbReference type="NCBI Taxonomy" id="357804"/>
    <lineage>
        <taxon>Bacteria</taxon>
        <taxon>Pseudomonadati</taxon>
        <taxon>Pseudomonadota</taxon>
        <taxon>Gammaproteobacteria</taxon>
        <taxon>Alteromonadales</taxon>
        <taxon>Psychromonadaceae</taxon>
        <taxon>Psychromonas</taxon>
    </lineage>
</organism>
<name>FOLD_PSYIN</name>
<proteinExistence type="inferred from homology"/>
<accession>A1SUX5</accession>
<feature type="chain" id="PRO_0000305869" description="Bifunctional protein FolD">
    <location>
        <begin position="1"/>
        <end position="285"/>
    </location>
</feature>
<feature type="binding site" evidence="1">
    <location>
        <begin position="166"/>
        <end position="168"/>
    </location>
    <ligand>
        <name>NADP(+)</name>
        <dbReference type="ChEBI" id="CHEBI:58349"/>
    </ligand>
</feature>
<feature type="binding site" evidence="1">
    <location>
        <position position="232"/>
    </location>
    <ligand>
        <name>NADP(+)</name>
        <dbReference type="ChEBI" id="CHEBI:58349"/>
    </ligand>
</feature>
<comment type="function">
    <text evidence="1">Catalyzes the oxidation of 5,10-methylenetetrahydrofolate to 5,10-methenyltetrahydrofolate and then the hydrolysis of 5,10-methenyltetrahydrofolate to 10-formyltetrahydrofolate.</text>
</comment>
<comment type="catalytic activity">
    <reaction evidence="1">
        <text>(6R)-5,10-methylene-5,6,7,8-tetrahydrofolate + NADP(+) = (6R)-5,10-methenyltetrahydrofolate + NADPH</text>
        <dbReference type="Rhea" id="RHEA:22812"/>
        <dbReference type="ChEBI" id="CHEBI:15636"/>
        <dbReference type="ChEBI" id="CHEBI:57455"/>
        <dbReference type="ChEBI" id="CHEBI:57783"/>
        <dbReference type="ChEBI" id="CHEBI:58349"/>
        <dbReference type="EC" id="1.5.1.5"/>
    </reaction>
</comment>
<comment type="catalytic activity">
    <reaction evidence="1">
        <text>(6R)-5,10-methenyltetrahydrofolate + H2O = (6R)-10-formyltetrahydrofolate + H(+)</text>
        <dbReference type="Rhea" id="RHEA:23700"/>
        <dbReference type="ChEBI" id="CHEBI:15377"/>
        <dbReference type="ChEBI" id="CHEBI:15378"/>
        <dbReference type="ChEBI" id="CHEBI:57455"/>
        <dbReference type="ChEBI" id="CHEBI:195366"/>
        <dbReference type="EC" id="3.5.4.9"/>
    </reaction>
</comment>
<comment type="pathway">
    <text evidence="1">One-carbon metabolism; tetrahydrofolate interconversion.</text>
</comment>
<comment type="subunit">
    <text evidence="1">Homodimer.</text>
</comment>
<comment type="similarity">
    <text evidence="1">Belongs to the tetrahydrofolate dehydrogenase/cyclohydrolase family.</text>
</comment>
<gene>
    <name evidence="1" type="primary">folD</name>
    <name type="ordered locus">Ping_1473</name>
</gene>
<evidence type="ECO:0000255" key="1">
    <source>
        <dbReference type="HAMAP-Rule" id="MF_01576"/>
    </source>
</evidence>
<protein>
    <recommendedName>
        <fullName evidence="1">Bifunctional protein FolD</fullName>
    </recommendedName>
    <domain>
        <recommendedName>
            <fullName evidence="1">Methylenetetrahydrofolate dehydrogenase</fullName>
            <ecNumber evidence="1">1.5.1.5</ecNumber>
        </recommendedName>
    </domain>
    <domain>
        <recommendedName>
            <fullName evidence="1">Methenyltetrahydrofolate cyclohydrolase</fullName>
            <ecNumber evidence="1">3.5.4.9</ecNumber>
        </recommendedName>
    </domain>
</protein>